<feature type="chain" id="PRO_0000284542" description="Leucine-rich repeat-containing protein 71">
    <location>
        <begin position="1"/>
        <end position="559"/>
    </location>
</feature>
<feature type="repeat" description="LRR 1">
    <location>
        <begin position="172"/>
        <end position="193"/>
    </location>
</feature>
<feature type="repeat" description="LRR 2">
    <location>
        <begin position="196"/>
        <end position="216"/>
    </location>
</feature>
<feature type="repeat" description="LRR 3">
    <location>
        <begin position="221"/>
        <end position="241"/>
    </location>
</feature>
<feature type="repeat" description="LRR 4">
    <location>
        <begin position="253"/>
        <end position="266"/>
    </location>
</feature>
<feature type="repeat" description="LRR 5">
    <location>
        <begin position="281"/>
        <end position="302"/>
    </location>
</feature>
<feature type="region of interest" description="Disordered" evidence="1">
    <location>
        <begin position="1"/>
        <end position="56"/>
    </location>
</feature>
<feature type="region of interest" description="Disordered" evidence="1">
    <location>
        <begin position="324"/>
        <end position="427"/>
    </location>
</feature>
<feature type="compositionally biased region" description="Low complexity" evidence="1">
    <location>
        <begin position="1"/>
        <end position="18"/>
    </location>
</feature>
<feature type="compositionally biased region" description="Basic and acidic residues" evidence="1">
    <location>
        <begin position="28"/>
        <end position="38"/>
    </location>
</feature>
<feature type="compositionally biased region" description="Basic and acidic residues" evidence="1">
    <location>
        <begin position="324"/>
        <end position="348"/>
    </location>
</feature>
<feature type="compositionally biased region" description="Basic and acidic residues" evidence="1">
    <location>
        <begin position="380"/>
        <end position="391"/>
    </location>
</feature>
<feature type="splice variant" id="VSP_024560" description="In isoform 2." evidence="2">
    <location>
        <begin position="1"/>
        <end position="215"/>
    </location>
</feature>
<feature type="splice variant" id="VSP_024561" description="In isoform 2." evidence="2">
    <original>E</original>
    <variation>EQ</variation>
    <location>
        <position position="443"/>
    </location>
</feature>
<feature type="splice variant" id="VSP_024562" description="In isoform 2." evidence="2">
    <original>KNCFAPQCPAYAIIQELMLPRDPIKAKLREDEAMAFFP</original>
    <variation>VSPFHSLLLKQTLPLSAVILDSCCRQLLSPHFQGRKIASPHNVLRTP</variation>
    <location>
        <begin position="522"/>
        <end position="559"/>
    </location>
</feature>
<feature type="sequence variant" id="VAR_031773" description="In dbSNP:rs12119908.">
    <original>R</original>
    <variation>H</variation>
    <location>
        <position position="483"/>
    </location>
</feature>
<feature type="sequence variant" id="VAR_031774" description="In dbSNP:rs822431.">
    <original>S</original>
    <variation>A</variation>
    <location>
        <position position="503"/>
    </location>
</feature>
<feature type="sequence variant" id="VAR_059593" description="In dbSNP:rs11264585.">
    <original>A</original>
    <variation>T</variation>
    <location>
        <position position="533"/>
    </location>
</feature>
<keyword id="KW-0025">Alternative splicing</keyword>
<keyword id="KW-0433">Leucine-rich repeat</keyword>
<keyword id="KW-1267">Proteomics identification</keyword>
<keyword id="KW-1185">Reference proteome</keyword>
<keyword id="KW-0677">Repeat</keyword>
<sequence length="559" mass="61825">MSSEQSAPGASPRAPRPGTQKSSGAVTKKGERAAKEKPATVLPPVGEEEPKSPEEYQCSGVLETDFAELCTRWGYTDFPKVVNRPRPHPPFVPSASLSEKATLDDPRLSGSCSLNSLESKYVFFRPTIQVELEQEDSKSVKEIYIRGWKVEERILGVFSKCLPPLTQLQAINLWKVGLTDKTLTTFIELLPLCSSTLRKVSLEGNPLPEQSYHKLMALDSTIAHLSLRNNNIDDRGAQLLGQALSTLHSCNRTLVSLNLGFNHIGDEGAGYIADGLRLNRSLLWLSLAHNRIQDKGALKLAEVLRAFELTHTEVVERRRLLLEKGTQERSRSPSSSRHGDSKTDREKSQMVGISNSALVDKTDKTQTMKTPKGLGKKKEKSWELAKKEEKLGSGQSPTQGTPKKEDATKAGKGKVTIPEQKPSRAKGIKIGSREKRSILLESELVVEATEVVNPLLEPVEHRDGKVFMPGNKVLLHLNLIRNRITEVGLEGFLATVQYQMQFSKAKSASKGPVGLLWLSLAKNCFAPQCPAYAIIQELMLPRDPIKAKLREDEAMAFFP</sequence>
<comment type="alternative products">
    <event type="alternative splicing"/>
    <isoform>
        <id>Q8N4P6-1</id>
        <name>1</name>
        <sequence type="displayed"/>
    </isoform>
    <isoform>
        <id>Q8N4P6-2</id>
        <name>2</name>
        <sequence type="described" ref="VSP_024560 VSP_024561 VSP_024562"/>
    </isoform>
</comment>
<organism>
    <name type="scientific">Homo sapiens</name>
    <name type="common">Human</name>
    <dbReference type="NCBI Taxonomy" id="9606"/>
    <lineage>
        <taxon>Eukaryota</taxon>
        <taxon>Metazoa</taxon>
        <taxon>Chordata</taxon>
        <taxon>Craniata</taxon>
        <taxon>Vertebrata</taxon>
        <taxon>Euteleostomi</taxon>
        <taxon>Mammalia</taxon>
        <taxon>Eutheria</taxon>
        <taxon>Euarchontoglires</taxon>
        <taxon>Primates</taxon>
        <taxon>Haplorrhini</taxon>
        <taxon>Catarrhini</taxon>
        <taxon>Hominidae</taxon>
        <taxon>Homo</taxon>
    </lineage>
</organism>
<accession>Q8N4P6</accession>
<accession>Q96M24</accession>
<proteinExistence type="evidence at protein level"/>
<name>LRC71_HUMAN</name>
<reference key="1">
    <citation type="journal article" date="2004" name="Nat. Genet.">
        <title>Complete sequencing and characterization of 21,243 full-length human cDNAs.</title>
        <authorList>
            <person name="Ota T."/>
            <person name="Suzuki Y."/>
            <person name="Nishikawa T."/>
            <person name="Otsuki T."/>
            <person name="Sugiyama T."/>
            <person name="Irie R."/>
            <person name="Wakamatsu A."/>
            <person name="Hayashi K."/>
            <person name="Sato H."/>
            <person name="Nagai K."/>
            <person name="Kimura K."/>
            <person name="Makita H."/>
            <person name="Sekine M."/>
            <person name="Obayashi M."/>
            <person name="Nishi T."/>
            <person name="Shibahara T."/>
            <person name="Tanaka T."/>
            <person name="Ishii S."/>
            <person name="Yamamoto J."/>
            <person name="Saito K."/>
            <person name="Kawai Y."/>
            <person name="Isono Y."/>
            <person name="Nakamura Y."/>
            <person name="Nagahari K."/>
            <person name="Murakami K."/>
            <person name="Yasuda T."/>
            <person name="Iwayanagi T."/>
            <person name="Wagatsuma M."/>
            <person name="Shiratori A."/>
            <person name="Sudo H."/>
            <person name="Hosoiri T."/>
            <person name="Kaku Y."/>
            <person name="Kodaira H."/>
            <person name="Kondo H."/>
            <person name="Sugawara M."/>
            <person name="Takahashi M."/>
            <person name="Kanda K."/>
            <person name="Yokoi T."/>
            <person name="Furuya T."/>
            <person name="Kikkawa E."/>
            <person name="Omura Y."/>
            <person name="Abe K."/>
            <person name="Kamihara K."/>
            <person name="Katsuta N."/>
            <person name="Sato K."/>
            <person name="Tanikawa M."/>
            <person name="Yamazaki M."/>
            <person name="Ninomiya K."/>
            <person name="Ishibashi T."/>
            <person name="Yamashita H."/>
            <person name="Murakawa K."/>
            <person name="Fujimori K."/>
            <person name="Tanai H."/>
            <person name="Kimata M."/>
            <person name="Watanabe M."/>
            <person name="Hiraoka S."/>
            <person name="Chiba Y."/>
            <person name="Ishida S."/>
            <person name="Ono Y."/>
            <person name="Takiguchi S."/>
            <person name="Watanabe S."/>
            <person name="Yosida M."/>
            <person name="Hotuta T."/>
            <person name="Kusano J."/>
            <person name="Kanehori K."/>
            <person name="Takahashi-Fujii A."/>
            <person name="Hara H."/>
            <person name="Tanase T.-O."/>
            <person name="Nomura Y."/>
            <person name="Togiya S."/>
            <person name="Komai F."/>
            <person name="Hara R."/>
            <person name="Takeuchi K."/>
            <person name="Arita M."/>
            <person name="Imose N."/>
            <person name="Musashino K."/>
            <person name="Yuuki H."/>
            <person name="Oshima A."/>
            <person name="Sasaki N."/>
            <person name="Aotsuka S."/>
            <person name="Yoshikawa Y."/>
            <person name="Matsunawa H."/>
            <person name="Ichihara T."/>
            <person name="Shiohata N."/>
            <person name="Sano S."/>
            <person name="Moriya S."/>
            <person name="Momiyama H."/>
            <person name="Satoh N."/>
            <person name="Takami S."/>
            <person name="Terashima Y."/>
            <person name="Suzuki O."/>
            <person name="Nakagawa S."/>
            <person name="Senoh A."/>
            <person name="Mizoguchi H."/>
            <person name="Goto Y."/>
            <person name="Shimizu F."/>
            <person name="Wakebe H."/>
            <person name="Hishigaki H."/>
            <person name="Watanabe T."/>
            <person name="Sugiyama A."/>
            <person name="Takemoto M."/>
            <person name="Kawakami B."/>
            <person name="Yamazaki M."/>
            <person name="Watanabe K."/>
            <person name="Kumagai A."/>
            <person name="Itakura S."/>
            <person name="Fukuzumi Y."/>
            <person name="Fujimori Y."/>
            <person name="Komiyama M."/>
            <person name="Tashiro H."/>
            <person name="Tanigami A."/>
            <person name="Fujiwara T."/>
            <person name="Ono T."/>
            <person name="Yamada K."/>
            <person name="Fujii Y."/>
            <person name="Ozaki K."/>
            <person name="Hirao M."/>
            <person name="Ohmori Y."/>
            <person name="Kawabata A."/>
            <person name="Hikiji T."/>
            <person name="Kobatake N."/>
            <person name="Inagaki H."/>
            <person name="Ikema Y."/>
            <person name="Okamoto S."/>
            <person name="Okitani R."/>
            <person name="Kawakami T."/>
            <person name="Noguchi S."/>
            <person name="Itoh T."/>
            <person name="Shigeta K."/>
            <person name="Senba T."/>
            <person name="Matsumura K."/>
            <person name="Nakajima Y."/>
            <person name="Mizuno T."/>
            <person name="Morinaga M."/>
            <person name="Sasaki M."/>
            <person name="Togashi T."/>
            <person name="Oyama M."/>
            <person name="Hata H."/>
            <person name="Watanabe M."/>
            <person name="Komatsu T."/>
            <person name="Mizushima-Sugano J."/>
            <person name="Satoh T."/>
            <person name="Shirai Y."/>
            <person name="Takahashi Y."/>
            <person name="Nakagawa K."/>
            <person name="Okumura K."/>
            <person name="Nagase T."/>
            <person name="Nomura N."/>
            <person name="Kikuchi H."/>
            <person name="Masuho Y."/>
            <person name="Yamashita R."/>
            <person name="Nakai K."/>
            <person name="Yada T."/>
            <person name="Nakamura Y."/>
            <person name="Ohara O."/>
            <person name="Isogai T."/>
            <person name="Sugano S."/>
        </authorList>
    </citation>
    <scope>NUCLEOTIDE SEQUENCE [LARGE SCALE MRNA] (ISOFORM 2)</scope>
    <source>
        <tissue>Testis</tissue>
    </source>
</reference>
<reference key="2">
    <citation type="journal article" date="2006" name="Nature">
        <title>The DNA sequence and biological annotation of human chromosome 1.</title>
        <authorList>
            <person name="Gregory S.G."/>
            <person name="Barlow K.F."/>
            <person name="McLay K.E."/>
            <person name="Kaul R."/>
            <person name="Swarbreck D."/>
            <person name="Dunham A."/>
            <person name="Scott C.E."/>
            <person name="Howe K.L."/>
            <person name="Woodfine K."/>
            <person name="Spencer C.C.A."/>
            <person name="Jones M.C."/>
            <person name="Gillson C."/>
            <person name="Searle S."/>
            <person name="Zhou Y."/>
            <person name="Kokocinski F."/>
            <person name="McDonald L."/>
            <person name="Evans R."/>
            <person name="Phillips K."/>
            <person name="Atkinson A."/>
            <person name="Cooper R."/>
            <person name="Jones C."/>
            <person name="Hall R.E."/>
            <person name="Andrews T.D."/>
            <person name="Lloyd C."/>
            <person name="Ainscough R."/>
            <person name="Almeida J.P."/>
            <person name="Ambrose K.D."/>
            <person name="Anderson F."/>
            <person name="Andrew R.W."/>
            <person name="Ashwell R.I.S."/>
            <person name="Aubin K."/>
            <person name="Babbage A.K."/>
            <person name="Bagguley C.L."/>
            <person name="Bailey J."/>
            <person name="Beasley H."/>
            <person name="Bethel G."/>
            <person name="Bird C.P."/>
            <person name="Bray-Allen S."/>
            <person name="Brown J.Y."/>
            <person name="Brown A.J."/>
            <person name="Buckley D."/>
            <person name="Burton J."/>
            <person name="Bye J."/>
            <person name="Carder C."/>
            <person name="Chapman J.C."/>
            <person name="Clark S.Y."/>
            <person name="Clarke G."/>
            <person name="Clee C."/>
            <person name="Cobley V."/>
            <person name="Collier R.E."/>
            <person name="Corby N."/>
            <person name="Coville G.J."/>
            <person name="Davies J."/>
            <person name="Deadman R."/>
            <person name="Dunn M."/>
            <person name="Earthrowl M."/>
            <person name="Ellington A.G."/>
            <person name="Errington H."/>
            <person name="Frankish A."/>
            <person name="Frankland J."/>
            <person name="French L."/>
            <person name="Garner P."/>
            <person name="Garnett J."/>
            <person name="Gay L."/>
            <person name="Ghori M.R.J."/>
            <person name="Gibson R."/>
            <person name="Gilby L.M."/>
            <person name="Gillett W."/>
            <person name="Glithero R.J."/>
            <person name="Grafham D.V."/>
            <person name="Griffiths C."/>
            <person name="Griffiths-Jones S."/>
            <person name="Grocock R."/>
            <person name="Hammond S."/>
            <person name="Harrison E.S.I."/>
            <person name="Hart E."/>
            <person name="Haugen E."/>
            <person name="Heath P.D."/>
            <person name="Holmes S."/>
            <person name="Holt K."/>
            <person name="Howden P.J."/>
            <person name="Hunt A.R."/>
            <person name="Hunt S.E."/>
            <person name="Hunter G."/>
            <person name="Isherwood J."/>
            <person name="James R."/>
            <person name="Johnson C."/>
            <person name="Johnson D."/>
            <person name="Joy A."/>
            <person name="Kay M."/>
            <person name="Kershaw J.K."/>
            <person name="Kibukawa M."/>
            <person name="Kimberley A.M."/>
            <person name="King A."/>
            <person name="Knights A.J."/>
            <person name="Lad H."/>
            <person name="Laird G."/>
            <person name="Lawlor S."/>
            <person name="Leongamornlert D.A."/>
            <person name="Lloyd D.M."/>
            <person name="Loveland J."/>
            <person name="Lovell J."/>
            <person name="Lush M.J."/>
            <person name="Lyne R."/>
            <person name="Martin S."/>
            <person name="Mashreghi-Mohammadi M."/>
            <person name="Matthews L."/>
            <person name="Matthews N.S.W."/>
            <person name="McLaren S."/>
            <person name="Milne S."/>
            <person name="Mistry S."/>
            <person name="Moore M.J.F."/>
            <person name="Nickerson T."/>
            <person name="O'Dell C.N."/>
            <person name="Oliver K."/>
            <person name="Palmeiri A."/>
            <person name="Palmer S.A."/>
            <person name="Parker A."/>
            <person name="Patel D."/>
            <person name="Pearce A.V."/>
            <person name="Peck A.I."/>
            <person name="Pelan S."/>
            <person name="Phelps K."/>
            <person name="Phillimore B.J."/>
            <person name="Plumb R."/>
            <person name="Rajan J."/>
            <person name="Raymond C."/>
            <person name="Rouse G."/>
            <person name="Saenphimmachak C."/>
            <person name="Sehra H.K."/>
            <person name="Sheridan E."/>
            <person name="Shownkeen R."/>
            <person name="Sims S."/>
            <person name="Skuce C.D."/>
            <person name="Smith M."/>
            <person name="Steward C."/>
            <person name="Subramanian S."/>
            <person name="Sycamore N."/>
            <person name="Tracey A."/>
            <person name="Tromans A."/>
            <person name="Van Helmond Z."/>
            <person name="Wall M."/>
            <person name="Wallis J.M."/>
            <person name="White S."/>
            <person name="Whitehead S.L."/>
            <person name="Wilkinson J.E."/>
            <person name="Willey D.L."/>
            <person name="Williams H."/>
            <person name="Wilming L."/>
            <person name="Wray P.W."/>
            <person name="Wu Z."/>
            <person name="Coulson A."/>
            <person name="Vaudin M."/>
            <person name="Sulston J.E."/>
            <person name="Durbin R.M."/>
            <person name="Hubbard T."/>
            <person name="Wooster R."/>
            <person name="Dunham I."/>
            <person name="Carter N.P."/>
            <person name="McVean G."/>
            <person name="Ross M.T."/>
            <person name="Harrow J."/>
            <person name="Olson M.V."/>
            <person name="Beck S."/>
            <person name="Rogers J."/>
            <person name="Bentley D.R."/>
        </authorList>
    </citation>
    <scope>NUCLEOTIDE SEQUENCE [LARGE SCALE GENOMIC DNA]</scope>
</reference>
<reference key="3">
    <citation type="journal article" date="2004" name="Genome Res.">
        <title>The status, quality, and expansion of the NIH full-length cDNA project: the Mammalian Gene Collection (MGC).</title>
        <authorList>
            <consortium name="The MGC Project Team"/>
        </authorList>
    </citation>
    <scope>NUCLEOTIDE SEQUENCE [LARGE SCALE MRNA] (ISOFORM 1)</scope>
    <source>
        <tissue>Brain</tissue>
    </source>
</reference>
<protein>
    <recommendedName>
        <fullName>Leucine-rich repeat-containing protein 71</fullName>
    </recommendedName>
</protein>
<dbReference type="EMBL" id="AK057446">
    <property type="protein sequence ID" value="BAB71490.1"/>
    <property type="molecule type" value="mRNA"/>
</dbReference>
<dbReference type="EMBL" id="AL356104">
    <property type="status" value="NOT_ANNOTATED_CDS"/>
    <property type="molecule type" value="Genomic_DNA"/>
</dbReference>
<dbReference type="EMBL" id="BC033790">
    <property type="protein sequence ID" value="AAH33790.1"/>
    <property type="molecule type" value="mRNA"/>
</dbReference>
<dbReference type="CCDS" id="CCDS44249.1">
    <molecule id="Q8N4P6-1"/>
</dbReference>
<dbReference type="RefSeq" id="NP_653303.2">
    <molecule id="Q8N4P6-1"/>
    <property type="nucleotide sequence ID" value="NM_144702.3"/>
</dbReference>
<dbReference type="SMR" id="Q8N4P6"/>
<dbReference type="BioGRID" id="127220">
    <property type="interactions" value="4"/>
</dbReference>
<dbReference type="FunCoup" id="Q8N4P6">
    <property type="interactions" value="17"/>
</dbReference>
<dbReference type="IntAct" id="Q8N4P6">
    <property type="interactions" value="2"/>
</dbReference>
<dbReference type="STRING" id="9606.ENSP00000336661"/>
<dbReference type="GlyGen" id="Q8N4P6">
    <property type="glycosylation" value="3 sites, 1 O-linked glycan (3 sites)"/>
</dbReference>
<dbReference type="iPTMnet" id="Q8N4P6"/>
<dbReference type="PhosphoSitePlus" id="Q8N4P6"/>
<dbReference type="BioMuta" id="LRRC71"/>
<dbReference type="DMDM" id="74759883"/>
<dbReference type="jPOST" id="Q8N4P6"/>
<dbReference type="MassIVE" id="Q8N4P6"/>
<dbReference type="PaxDb" id="9606-ENSP00000336661"/>
<dbReference type="PeptideAtlas" id="Q8N4P6"/>
<dbReference type="ProteomicsDB" id="71955">
    <molecule id="Q8N4P6-1"/>
</dbReference>
<dbReference type="ProteomicsDB" id="71956">
    <molecule id="Q8N4P6-2"/>
</dbReference>
<dbReference type="Antibodypedia" id="34229">
    <property type="antibodies" value="30 antibodies from 15 providers"/>
</dbReference>
<dbReference type="DNASU" id="149499"/>
<dbReference type="Ensembl" id="ENST00000337428.8">
    <molecule id="Q8N4P6-1"/>
    <property type="protein sequence ID" value="ENSP00000336661.7"/>
    <property type="gene ID" value="ENSG00000160838.14"/>
</dbReference>
<dbReference type="GeneID" id="149499"/>
<dbReference type="KEGG" id="hsa:149499"/>
<dbReference type="MANE-Select" id="ENST00000337428.8">
    <property type="protein sequence ID" value="ENSP00000336661.7"/>
    <property type="RefSeq nucleotide sequence ID" value="NM_144702.3"/>
    <property type="RefSeq protein sequence ID" value="NP_653303.2"/>
</dbReference>
<dbReference type="UCSC" id="uc001fqm.3">
    <molecule id="Q8N4P6-1"/>
    <property type="organism name" value="human"/>
</dbReference>
<dbReference type="AGR" id="HGNC:26556"/>
<dbReference type="CTD" id="149499"/>
<dbReference type="DisGeNET" id="149499"/>
<dbReference type="GeneCards" id="LRRC71"/>
<dbReference type="HGNC" id="HGNC:26556">
    <property type="gene designation" value="LRRC71"/>
</dbReference>
<dbReference type="HPA" id="ENSG00000160838">
    <property type="expression patterns" value="Group enriched (choroid plexus, fallopian tube, testis)"/>
</dbReference>
<dbReference type="neXtProt" id="NX_Q8N4P6"/>
<dbReference type="OpenTargets" id="ENSG00000160838"/>
<dbReference type="PharmGKB" id="PA142672476"/>
<dbReference type="VEuPathDB" id="HostDB:ENSG00000160838"/>
<dbReference type="eggNOG" id="KOG4308">
    <property type="taxonomic scope" value="Eukaryota"/>
</dbReference>
<dbReference type="GeneTree" id="ENSGT00440000034367"/>
<dbReference type="HOGENOM" id="CLU_035960_0_0_1"/>
<dbReference type="InParanoid" id="Q8N4P6"/>
<dbReference type="OMA" id="VQYQVQF"/>
<dbReference type="OrthoDB" id="120976at2759"/>
<dbReference type="PAN-GO" id="Q8N4P6">
    <property type="GO annotations" value="0 GO annotations based on evolutionary models"/>
</dbReference>
<dbReference type="PhylomeDB" id="Q8N4P6"/>
<dbReference type="TreeFam" id="TF329605"/>
<dbReference type="PathwayCommons" id="Q8N4P6"/>
<dbReference type="SignaLink" id="Q8N4P6"/>
<dbReference type="BioGRID-ORCS" id="149499">
    <property type="hits" value="23 hits in 1144 CRISPR screens"/>
</dbReference>
<dbReference type="ChiTaRS" id="LRRC71">
    <property type="organism name" value="human"/>
</dbReference>
<dbReference type="GenomeRNAi" id="149499"/>
<dbReference type="Pharos" id="Q8N4P6">
    <property type="development level" value="Tdark"/>
</dbReference>
<dbReference type="PRO" id="PR:Q8N4P6"/>
<dbReference type="Proteomes" id="UP000005640">
    <property type="component" value="Chromosome 1"/>
</dbReference>
<dbReference type="RNAct" id="Q8N4P6">
    <property type="molecule type" value="protein"/>
</dbReference>
<dbReference type="Bgee" id="ENSG00000160838">
    <property type="expression patterns" value="Expressed in right uterine tube and 124 other cell types or tissues"/>
</dbReference>
<dbReference type="Gene3D" id="3.80.10.10">
    <property type="entry name" value="Ribonuclease Inhibitor"/>
    <property type="match status" value="1"/>
</dbReference>
<dbReference type="InterPro" id="IPR001611">
    <property type="entry name" value="Leu-rich_rpt"/>
</dbReference>
<dbReference type="InterPro" id="IPR053040">
    <property type="entry name" value="LRR-containing_protein_71"/>
</dbReference>
<dbReference type="InterPro" id="IPR032675">
    <property type="entry name" value="LRR_dom_sf"/>
</dbReference>
<dbReference type="PANTHER" id="PTHR46984">
    <property type="entry name" value="LEUCINE-RICH REPEAT-CONTAINING PROTEIN 71"/>
    <property type="match status" value="1"/>
</dbReference>
<dbReference type="PANTHER" id="PTHR46984:SF1">
    <property type="entry name" value="LEUCINE-RICH REPEAT-CONTAINING PROTEIN 71"/>
    <property type="match status" value="1"/>
</dbReference>
<dbReference type="Pfam" id="PF13516">
    <property type="entry name" value="LRR_6"/>
    <property type="match status" value="3"/>
</dbReference>
<dbReference type="SMART" id="SM00368">
    <property type="entry name" value="LRR_RI"/>
    <property type="match status" value="4"/>
</dbReference>
<dbReference type="SUPFAM" id="SSF52047">
    <property type="entry name" value="RNI-like"/>
    <property type="match status" value="1"/>
</dbReference>
<gene>
    <name type="primary">LRRC71</name>
    <name type="synonym">C1orf92</name>
</gene>
<evidence type="ECO:0000256" key="1">
    <source>
        <dbReference type="SAM" id="MobiDB-lite"/>
    </source>
</evidence>
<evidence type="ECO:0000303" key="2">
    <source>
    </source>
</evidence>